<name>NANK_SHIF8</name>
<reference key="1">
    <citation type="journal article" date="2006" name="BMC Genomics">
        <title>Complete genome sequence of Shigella flexneri 5b and comparison with Shigella flexneri 2a.</title>
        <authorList>
            <person name="Nie H."/>
            <person name="Yang F."/>
            <person name="Zhang X."/>
            <person name="Yang J."/>
            <person name="Chen L."/>
            <person name="Wang J."/>
            <person name="Xiong Z."/>
            <person name="Peng J."/>
            <person name="Sun L."/>
            <person name="Dong J."/>
            <person name="Xue Y."/>
            <person name="Xu X."/>
            <person name="Chen S."/>
            <person name="Yao Z."/>
            <person name="Shen Y."/>
            <person name="Jin Q."/>
        </authorList>
    </citation>
    <scope>NUCLEOTIDE SEQUENCE [LARGE SCALE GENOMIC DNA]</scope>
    <source>
        <strain>8401</strain>
    </source>
</reference>
<sequence length="291" mass="29698">MTILAIDIGGTKLAAALIGADGQIRDRRELPTPASQTPEALRDALSALVSPLQAHAQRVAIASTGIIRDGSLLALNPHNLGGLLHFPLVKTLEQLTNLPTIAINDAQAAAWAEYQALEGDITDMVFITVSTGVGGGVVSGGKLLTGPGGLAGHIGHTLADPHGPVCGCGRTGCVEAIASGRGIAAAAQGELAGADARTIFTRAGQGDEQAQQLIHRSARTLARLIADIKATTDCQCVVVGGSVGLAEGYLALVEMYLAQEPAAFHVDLLAAHYRHDAGLLGAALLAQGEKL</sequence>
<accession>Q0T068</accession>
<feature type="chain" id="PRO_0000301461" description="N-acetylmannosamine kinase">
    <location>
        <begin position="1"/>
        <end position="291"/>
    </location>
</feature>
<feature type="binding site" evidence="1">
    <location>
        <begin position="5"/>
        <end position="12"/>
    </location>
    <ligand>
        <name>ATP</name>
        <dbReference type="ChEBI" id="CHEBI:30616"/>
    </ligand>
</feature>
<feature type="binding site" evidence="1">
    <location>
        <begin position="132"/>
        <end position="139"/>
    </location>
    <ligand>
        <name>ATP</name>
        <dbReference type="ChEBI" id="CHEBI:30616"/>
    </ligand>
</feature>
<feature type="binding site" evidence="1">
    <location>
        <position position="156"/>
    </location>
    <ligand>
        <name>Zn(2+)</name>
        <dbReference type="ChEBI" id="CHEBI:29105"/>
    </ligand>
</feature>
<feature type="binding site" evidence="1">
    <location>
        <position position="166"/>
    </location>
    <ligand>
        <name>Zn(2+)</name>
        <dbReference type="ChEBI" id="CHEBI:29105"/>
    </ligand>
</feature>
<feature type="binding site" evidence="1">
    <location>
        <position position="168"/>
    </location>
    <ligand>
        <name>Zn(2+)</name>
        <dbReference type="ChEBI" id="CHEBI:29105"/>
    </ligand>
</feature>
<feature type="binding site" evidence="1">
    <location>
        <position position="173"/>
    </location>
    <ligand>
        <name>Zn(2+)</name>
        <dbReference type="ChEBI" id="CHEBI:29105"/>
    </ligand>
</feature>
<comment type="function">
    <text evidence="1">Catalyzes the phosphorylation of N-acetylmannosamine (ManNAc) to ManNAc-6-P.</text>
</comment>
<comment type="catalytic activity">
    <reaction evidence="1">
        <text>an N-acyl-D-mannosamine + ATP = an N-acyl-D-mannosamine 6-phosphate + ADP + H(+)</text>
        <dbReference type="Rhea" id="RHEA:23832"/>
        <dbReference type="ChEBI" id="CHEBI:15378"/>
        <dbReference type="ChEBI" id="CHEBI:16062"/>
        <dbReference type="ChEBI" id="CHEBI:30616"/>
        <dbReference type="ChEBI" id="CHEBI:57666"/>
        <dbReference type="ChEBI" id="CHEBI:456216"/>
        <dbReference type="EC" id="2.7.1.60"/>
    </reaction>
</comment>
<comment type="pathway">
    <text evidence="1">Amino-sugar metabolism; N-acetylneuraminate degradation; D-fructose 6-phosphate from N-acetylneuraminate: step 2/5.</text>
</comment>
<comment type="subunit">
    <text evidence="1">Homodimer.</text>
</comment>
<comment type="similarity">
    <text evidence="1">Belongs to the ROK (NagC/XylR) family. NanK subfamily.</text>
</comment>
<gene>
    <name evidence="1" type="primary">nanK</name>
    <name type="ordered locus">SFV_3247</name>
</gene>
<protein>
    <recommendedName>
        <fullName evidence="1">N-acetylmannosamine kinase</fullName>
        <ecNumber evidence="1">2.7.1.60</ecNumber>
    </recommendedName>
    <alternativeName>
        <fullName evidence="1">ManNAc kinase</fullName>
    </alternativeName>
    <alternativeName>
        <fullName evidence="1">N-acetyl-D-mannosamine kinase</fullName>
    </alternativeName>
</protein>
<keyword id="KW-0067">ATP-binding</keyword>
<keyword id="KW-0119">Carbohydrate metabolism</keyword>
<keyword id="KW-0418">Kinase</keyword>
<keyword id="KW-0479">Metal-binding</keyword>
<keyword id="KW-0547">Nucleotide-binding</keyword>
<keyword id="KW-0808">Transferase</keyword>
<keyword id="KW-0862">Zinc</keyword>
<evidence type="ECO:0000255" key="1">
    <source>
        <dbReference type="HAMAP-Rule" id="MF_01234"/>
    </source>
</evidence>
<proteinExistence type="inferred from homology"/>
<dbReference type="EC" id="2.7.1.60" evidence="1"/>
<dbReference type="EMBL" id="CP000266">
    <property type="protein sequence ID" value="ABF05297.1"/>
    <property type="molecule type" value="Genomic_DNA"/>
</dbReference>
<dbReference type="RefSeq" id="WP_000153624.1">
    <property type="nucleotide sequence ID" value="NC_008258.1"/>
</dbReference>
<dbReference type="SMR" id="Q0T068"/>
<dbReference type="KEGG" id="sfv:SFV_3247"/>
<dbReference type="HOGENOM" id="CLU_036604_0_4_6"/>
<dbReference type="UniPathway" id="UPA00629">
    <property type="reaction ID" value="UER00681"/>
</dbReference>
<dbReference type="Proteomes" id="UP000000659">
    <property type="component" value="Chromosome"/>
</dbReference>
<dbReference type="GO" id="GO:0005524">
    <property type="term" value="F:ATP binding"/>
    <property type="evidence" value="ECO:0007669"/>
    <property type="project" value="UniProtKB-UniRule"/>
</dbReference>
<dbReference type="GO" id="GO:0009384">
    <property type="term" value="F:N-acylmannosamine kinase activity"/>
    <property type="evidence" value="ECO:0007669"/>
    <property type="project" value="UniProtKB-UniRule"/>
</dbReference>
<dbReference type="GO" id="GO:0008270">
    <property type="term" value="F:zinc ion binding"/>
    <property type="evidence" value="ECO:0007669"/>
    <property type="project" value="UniProtKB-UniRule"/>
</dbReference>
<dbReference type="GO" id="GO:0019262">
    <property type="term" value="P:N-acetylneuraminate catabolic process"/>
    <property type="evidence" value="ECO:0007669"/>
    <property type="project" value="UniProtKB-UniRule"/>
</dbReference>
<dbReference type="CDD" id="cd24069">
    <property type="entry name" value="ASKHA_NBD_ROK_EcNanK-like"/>
    <property type="match status" value="1"/>
</dbReference>
<dbReference type="FunFam" id="3.30.420.40:FF:000062">
    <property type="entry name" value="N-acetylmannosamine kinase"/>
    <property type="match status" value="1"/>
</dbReference>
<dbReference type="FunFam" id="3.30.420.40:FF:000063">
    <property type="entry name" value="N-acetylmannosamine kinase"/>
    <property type="match status" value="1"/>
</dbReference>
<dbReference type="Gene3D" id="3.30.420.40">
    <property type="match status" value="2"/>
</dbReference>
<dbReference type="HAMAP" id="MF_01234">
    <property type="entry name" value="ManNAc_kinase"/>
    <property type="match status" value="1"/>
</dbReference>
<dbReference type="InterPro" id="IPR043129">
    <property type="entry name" value="ATPase_NBD"/>
</dbReference>
<dbReference type="InterPro" id="IPR023945">
    <property type="entry name" value="ManNAc_kinase_bac"/>
</dbReference>
<dbReference type="InterPro" id="IPR000600">
    <property type="entry name" value="ROK"/>
</dbReference>
<dbReference type="InterPro" id="IPR049874">
    <property type="entry name" value="ROK_cs"/>
</dbReference>
<dbReference type="NCBIfam" id="NF047821">
    <property type="entry name" value="NactlManKinNanK"/>
    <property type="match status" value="1"/>
</dbReference>
<dbReference type="NCBIfam" id="NF003461">
    <property type="entry name" value="PRK05082.1"/>
    <property type="match status" value="1"/>
</dbReference>
<dbReference type="PANTHER" id="PTHR18964:SF169">
    <property type="entry name" value="N-ACETYLMANNOSAMINE KINASE"/>
    <property type="match status" value="1"/>
</dbReference>
<dbReference type="PANTHER" id="PTHR18964">
    <property type="entry name" value="ROK (REPRESSOR, ORF, KINASE) FAMILY"/>
    <property type="match status" value="1"/>
</dbReference>
<dbReference type="Pfam" id="PF00480">
    <property type="entry name" value="ROK"/>
    <property type="match status" value="1"/>
</dbReference>
<dbReference type="SUPFAM" id="SSF53067">
    <property type="entry name" value="Actin-like ATPase domain"/>
    <property type="match status" value="1"/>
</dbReference>
<dbReference type="PROSITE" id="PS01125">
    <property type="entry name" value="ROK"/>
    <property type="match status" value="1"/>
</dbReference>
<organism>
    <name type="scientific">Shigella flexneri serotype 5b (strain 8401)</name>
    <dbReference type="NCBI Taxonomy" id="373384"/>
    <lineage>
        <taxon>Bacteria</taxon>
        <taxon>Pseudomonadati</taxon>
        <taxon>Pseudomonadota</taxon>
        <taxon>Gammaproteobacteria</taxon>
        <taxon>Enterobacterales</taxon>
        <taxon>Enterobacteriaceae</taxon>
        <taxon>Shigella</taxon>
    </lineage>
</organism>